<accession>Q9ZLQ9</accession>
<keyword id="KW-0963">Cytoplasm</keyword>
<keyword id="KW-0328">Glycosyltransferase</keyword>
<keyword id="KW-0660">Purine salvage</keyword>
<keyword id="KW-0808">Transferase</keyword>
<evidence type="ECO:0000255" key="1">
    <source>
        <dbReference type="HAMAP-Rule" id="MF_00004"/>
    </source>
</evidence>
<gene>
    <name evidence="1" type="primary">apt</name>
    <name type="ordered locus">jhp_0519</name>
</gene>
<dbReference type="EC" id="2.4.2.7" evidence="1"/>
<dbReference type="EMBL" id="AE001439">
    <property type="protein sequence ID" value="AAD06100.1"/>
    <property type="molecule type" value="Genomic_DNA"/>
</dbReference>
<dbReference type="PIR" id="H71920">
    <property type="entry name" value="H71920"/>
</dbReference>
<dbReference type="RefSeq" id="WP_001004559.1">
    <property type="nucleotide sequence ID" value="NC_000921.1"/>
</dbReference>
<dbReference type="SMR" id="Q9ZLQ9"/>
<dbReference type="KEGG" id="hpj:jhp_0519"/>
<dbReference type="eggNOG" id="COG0503">
    <property type="taxonomic scope" value="Bacteria"/>
</dbReference>
<dbReference type="UniPathway" id="UPA00588">
    <property type="reaction ID" value="UER00646"/>
</dbReference>
<dbReference type="Proteomes" id="UP000000804">
    <property type="component" value="Chromosome"/>
</dbReference>
<dbReference type="GO" id="GO:0005737">
    <property type="term" value="C:cytoplasm"/>
    <property type="evidence" value="ECO:0007669"/>
    <property type="project" value="UniProtKB-SubCell"/>
</dbReference>
<dbReference type="GO" id="GO:0002055">
    <property type="term" value="F:adenine binding"/>
    <property type="evidence" value="ECO:0007669"/>
    <property type="project" value="TreeGrafter"/>
</dbReference>
<dbReference type="GO" id="GO:0003999">
    <property type="term" value="F:adenine phosphoribosyltransferase activity"/>
    <property type="evidence" value="ECO:0007669"/>
    <property type="project" value="UniProtKB-UniRule"/>
</dbReference>
<dbReference type="GO" id="GO:0016208">
    <property type="term" value="F:AMP binding"/>
    <property type="evidence" value="ECO:0007669"/>
    <property type="project" value="TreeGrafter"/>
</dbReference>
<dbReference type="GO" id="GO:0006168">
    <property type="term" value="P:adenine salvage"/>
    <property type="evidence" value="ECO:0007669"/>
    <property type="project" value="InterPro"/>
</dbReference>
<dbReference type="GO" id="GO:0044209">
    <property type="term" value="P:AMP salvage"/>
    <property type="evidence" value="ECO:0007669"/>
    <property type="project" value="UniProtKB-UniRule"/>
</dbReference>
<dbReference type="GO" id="GO:0006166">
    <property type="term" value="P:purine ribonucleoside salvage"/>
    <property type="evidence" value="ECO:0007669"/>
    <property type="project" value="UniProtKB-KW"/>
</dbReference>
<dbReference type="CDD" id="cd06223">
    <property type="entry name" value="PRTases_typeI"/>
    <property type="match status" value="1"/>
</dbReference>
<dbReference type="FunFam" id="3.40.50.2020:FF:000021">
    <property type="entry name" value="Adenine phosphoribosyltransferase"/>
    <property type="match status" value="1"/>
</dbReference>
<dbReference type="Gene3D" id="3.40.50.2020">
    <property type="match status" value="1"/>
</dbReference>
<dbReference type="HAMAP" id="MF_00004">
    <property type="entry name" value="Aden_phosphoribosyltr"/>
    <property type="match status" value="1"/>
</dbReference>
<dbReference type="InterPro" id="IPR005764">
    <property type="entry name" value="Ade_phspho_trans"/>
</dbReference>
<dbReference type="InterPro" id="IPR000836">
    <property type="entry name" value="PRibTrfase_dom"/>
</dbReference>
<dbReference type="InterPro" id="IPR029057">
    <property type="entry name" value="PRTase-like"/>
</dbReference>
<dbReference type="InterPro" id="IPR050054">
    <property type="entry name" value="UPRTase/APRTase"/>
</dbReference>
<dbReference type="NCBIfam" id="TIGR01090">
    <property type="entry name" value="apt"/>
    <property type="match status" value="1"/>
</dbReference>
<dbReference type="NCBIfam" id="NF002634">
    <property type="entry name" value="PRK02304.1-3"/>
    <property type="match status" value="1"/>
</dbReference>
<dbReference type="NCBIfam" id="NF002636">
    <property type="entry name" value="PRK02304.1-5"/>
    <property type="match status" value="1"/>
</dbReference>
<dbReference type="PANTHER" id="PTHR32315">
    <property type="entry name" value="ADENINE PHOSPHORIBOSYLTRANSFERASE"/>
    <property type="match status" value="1"/>
</dbReference>
<dbReference type="PANTHER" id="PTHR32315:SF3">
    <property type="entry name" value="ADENINE PHOSPHORIBOSYLTRANSFERASE"/>
    <property type="match status" value="1"/>
</dbReference>
<dbReference type="Pfam" id="PF00156">
    <property type="entry name" value="Pribosyltran"/>
    <property type="match status" value="1"/>
</dbReference>
<dbReference type="SUPFAM" id="SSF53271">
    <property type="entry name" value="PRTase-like"/>
    <property type="match status" value="1"/>
</dbReference>
<dbReference type="PROSITE" id="PS00103">
    <property type="entry name" value="PUR_PYR_PR_TRANSFER"/>
    <property type="match status" value="1"/>
</dbReference>
<organism>
    <name type="scientific">Helicobacter pylori (strain J99 / ATCC 700824)</name>
    <name type="common">Campylobacter pylori J99</name>
    <dbReference type="NCBI Taxonomy" id="85963"/>
    <lineage>
        <taxon>Bacteria</taxon>
        <taxon>Pseudomonadati</taxon>
        <taxon>Campylobacterota</taxon>
        <taxon>Epsilonproteobacteria</taxon>
        <taxon>Campylobacterales</taxon>
        <taxon>Helicobacteraceae</taxon>
        <taxon>Helicobacter</taxon>
    </lineage>
</organism>
<feature type="chain" id="PRO_0000149395" description="Adenine phosphoribosyltransferase">
    <location>
        <begin position="1"/>
        <end position="179"/>
    </location>
</feature>
<name>APT_HELPJ</name>
<comment type="function">
    <text evidence="1">Catalyzes a salvage reaction resulting in the formation of AMP, that is energically less costly than de novo synthesis.</text>
</comment>
<comment type="catalytic activity">
    <reaction evidence="1">
        <text>AMP + diphosphate = 5-phospho-alpha-D-ribose 1-diphosphate + adenine</text>
        <dbReference type="Rhea" id="RHEA:16609"/>
        <dbReference type="ChEBI" id="CHEBI:16708"/>
        <dbReference type="ChEBI" id="CHEBI:33019"/>
        <dbReference type="ChEBI" id="CHEBI:58017"/>
        <dbReference type="ChEBI" id="CHEBI:456215"/>
        <dbReference type="EC" id="2.4.2.7"/>
    </reaction>
</comment>
<comment type="pathway">
    <text evidence="1">Purine metabolism; AMP biosynthesis via salvage pathway; AMP from adenine: step 1/1.</text>
</comment>
<comment type="subunit">
    <text evidence="1">Homodimer.</text>
</comment>
<comment type="subcellular location">
    <subcellularLocation>
        <location evidence="1">Cytoplasm</location>
    </subcellularLocation>
</comment>
<comment type="similarity">
    <text evidence="1">Belongs to the purine/pyrimidine phosphoribosyltransferase family.</text>
</comment>
<proteinExistence type="inferred from homology"/>
<protein>
    <recommendedName>
        <fullName evidence="1">Adenine phosphoribosyltransferase</fullName>
        <shortName evidence="1">APRT</shortName>
        <ecNumber evidence="1">2.4.2.7</ecNumber>
    </recommendedName>
</protein>
<sequence>MNEMLKEELLQSIREVKDYPKKGILFKDITTLLNYPKLFNKLIDALKKRYLALNIDFIVGIEARGFILGSAFAYALGVGFVPVRKKGKLPAHTLSQSYSLEYGSDSIEIHSDAFRGIKGVRVVLVDDLLATGGTALASLELIKALQAECIEACFLIGLKELPGIQLLEEHVKTFCLLEC</sequence>
<reference key="1">
    <citation type="journal article" date="1999" name="Nature">
        <title>Genomic sequence comparison of two unrelated isolates of the human gastric pathogen Helicobacter pylori.</title>
        <authorList>
            <person name="Alm R.A."/>
            <person name="Ling L.-S.L."/>
            <person name="Moir D.T."/>
            <person name="King B.L."/>
            <person name="Brown E.D."/>
            <person name="Doig P.C."/>
            <person name="Smith D.R."/>
            <person name="Noonan B."/>
            <person name="Guild B.C."/>
            <person name="deJonge B.L."/>
            <person name="Carmel G."/>
            <person name="Tummino P.J."/>
            <person name="Caruso A."/>
            <person name="Uria-Nickelsen M."/>
            <person name="Mills D.M."/>
            <person name="Ives C."/>
            <person name="Gibson R."/>
            <person name="Merberg D."/>
            <person name="Mills S.D."/>
            <person name="Jiang Q."/>
            <person name="Taylor D.E."/>
            <person name="Vovis G.F."/>
            <person name="Trust T.J."/>
        </authorList>
    </citation>
    <scope>NUCLEOTIDE SEQUENCE [LARGE SCALE GENOMIC DNA]</scope>
    <source>
        <strain>J99 / ATCC 700824</strain>
    </source>
</reference>